<dbReference type="EC" id="2.7.4.22" evidence="1"/>
<dbReference type="EMBL" id="AE017243">
    <property type="protein sequence ID" value="AAZ44622.1"/>
    <property type="molecule type" value="Genomic_DNA"/>
</dbReference>
<dbReference type="RefSeq" id="WP_011206385.1">
    <property type="nucleotide sequence ID" value="NC_007295.1"/>
</dbReference>
<dbReference type="SMR" id="Q4A9E9"/>
<dbReference type="GeneID" id="41334835"/>
<dbReference type="KEGG" id="mhj:MHJ_0536"/>
<dbReference type="eggNOG" id="COG0528">
    <property type="taxonomic scope" value="Bacteria"/>
</dbReference>
<dbReference type="HOGENOM" id="CLU_033861_0_1_14"/>
<dbReference type="OrthoDB" id="9807458at2"/>
<dbReference type="UniPathway" id="UPA00159">
    <property type="reaction ID" value="UER00275"/>
</dbReference>
<dbReference type="Proteomes" id="UP000000548">
    <property type="component" value="Chromosome"/>
</dbReference>
<dbReference type="GO" id="GO:0005737">
    <property type="term" value="C:cytoplasm"/>
    <property type="evidence" value="ECO:0007669"/>
    <property type="project" value="UniProtKB-SubCell"/>
</dbReference>
<dbReference type="GO" id="GO:0005524">
    <property type="term" value="F:ATP binding"/>
    <property type="evidence" value="ECO:0007669"/>
    <property type="project" value="UniProtKB-KW"/>
</dbReference>
<dbReference type="GO" id="GO:0033862">
    <property type="term" value="F:UMP kinase activity"/>
    <property type="evidence" value="ECO:0007669"/>
    <property type="project" value="UniProtKB-EC"/>
</dbReference>
<dbReference type="GO" id="GO:0044210">
    <property type="term" value="P:'de novo' CTP biosynthetic process"/>
    <property type="evidence" value="ECO:0007669"/>
    <property type="project" value="UniProtKB-UniRule"/>
</dbReference>
<dbReference type="GO" id="GO:0006225">
    <property type="term" value="P:UDP biosynthetic process"/>
    <property type="evidence" value="ECO:0007669"/>
    <property type="project" value="TreeGrafter"/>
</dbReference>
<dbReference type="CDD" id="cd04254">
    <property type="entry name" value="AAK_UMPK-PyrH-Ec"/>
    <property type="match status" value="1"/>
</dbReference>
<dbReference type="FunFam" id="3.40.1160.10:FF:000001">
    <property type="entry name" value="Uridylate kinase"/>
    <property type="match status" value="1"/>
</dbReference>
<dbReference type="Gene3D" id="3.40.1160.10">
    <property type="entry name" value="Acetylglutamate kinase-like"/>
    <property type="match status" value="1"/>
</dbReference>
<dbReference type="HAMAP" id="MF_01220_B">
    <property type="entry name" value="PyrH_B"/>
    <property type="match status" value="1"/>
</dbReference>
<dbReference type="InterPro" id="IPR036393">
    <property type="entry name" value="AceGlu_kinase-like_sf"/>
</dbReference>
<dbReference type="InterPro" id="IPR001048">
    <property type="entry name" value="Asp/Glu/Uridylate_kinase"/>
</dbReference>
<dbReference type="InterPro" id="IPR011817">
    <property type="entry name" value="Uridylate_kinase"/>
</dbReference>
<dbReference type="InterPro" id="IPR015963">
    <property type="entry name" value="Uridylate_kinase_bac"/>
</dbReference>
<dbReference type="NCBIfam" id="TIGR02075">
    <property type="entry name" value="pyrH_bact"/>
    <property type="match status" value="1"/>
</dbReference>
<dbReference type="PANTHER" id="PTHR42833">
    <property type="entry name" value="URIDYLATE KINASE"/>
    <property type="match status" value="1"/>
</dbReference>
<dbReference type="PANTHER" id="PTHR42833:SF4">
    <property type="entry name" value="URIDYLATE KINASE PUMPKIN, CHLOROPLASTIC"/>
    <property type="match status" value="1"/>
</dbReference>
<dbReference type="Pfam" id="PF00696">
    <property type="entry name" value="AA_kinase"/>
    <property type="match status" value="1"/>
</dbReference>
<dbReference type="PIRSF" id="PIRSF005650">
    <property type="entry name" value="Uridylate_kin"/>
    <property type="match status" value="1"/>
</dbReference>
<dbReference type="SUPFAM" id="SSF53633">
    <property type="entry name" value="Carbamate kinase-like"/>
    <property type="match status" value="1"/>
</dbReference>
<feature type="chain" id="PRO_0000323896" description="Uridylate kinase">
    <location>
        <begin position="1"/>
        <end position="236"/>
    </location>
</feature>
<feature type="binding site" evidence="1">
    <location>
        <begin position="8"/>
        <end position="11"/>
    </location>
    <ligand>
        <name>ATP</name>
        <dbReference type="ChEBI" id="CHEBI:30616"/>
    </ligand>
</feature>
<feature type="binding site" evidence="1">
    <location>
        <position position="51"/>
    </location>
    <ligand>
        <name>UMP</name>
        <dbReference type="ChEBI" id="CHEBI:57865"/>
    </ligand>
</feature>
<feature type="binding site" evidence="1">
    <location>
        <position position="52"/>
    </location>
    <ligand>
        <name>ATP</name>
        <dbReference type="ChEBI" id="CHEBI:30616"/>
    </ligand>
</feature>
<feature type="binding site" evidence="1">
    <location>
        <position position="56"/>
    </location>
    <ligand>
        <name>ATP</name>
        <dbReference type="ChEBI" id="CHEBI:30616"/>
    </ligand>
</feature>
<feature type="binding site" evidence="1">
    <location>
        <position position="71"/>
    </location>
    <ligand>
        <name>UMP</name>
        <dbReference type="ChEBI" id="CHEBI:57865"/>
    </ligand>
</feature>
<feature type="binding site" evidence="1">
    <location>
        <begin position="133"/>
        <end position="140"/>
    </location>
    <ligand>
        <name>UMP</name>
        <dbReference type="ChEBI" id="CHEBI:57865"/>
    </ligand>
</feature>
<feature type="binding site" evidence="1">
    <location>
        <position position="161"/>
    </location>
    <ligand>
        <name>ATP</name>
        <dbReference type="ChEBI" id="CHEBI:30616"/>
    </ligand>
</feature>
<feature type="binding site" evidence="1">
    <location>
        <position position="167"/>
    </location>
    <ligand>
        <name>ATP</name>
        <dbReference type="ChEBI" id="CHEBI:30616"/>
    </ligand>
</feature>
<feature type="binding site" evidence="1">
    <location>
        <position position="170"/>
    </location>
    <ligand>
        <name>ATP</name>
        <dbReference type="ChEBI" id="CHEBI:30616"/>
    </ligand>
</feature>
<protein>
    <recommendedName>
        <fullName evidence="1">Uridylate kinase</fullName>
        <shortName evidence="1">UK</shortName>
        <ecNumber evidence="1">2.7.4.22</ecNumber>
    </recommendedName>
    <alternativeName>
        <fullName evidence="1">Uridine monophosphate kinase</fullName>
        <shortName evidence="1">UMP kinase</shortName>
        <shortName evidence="1">UMPK</shortName>
    </alternativeName>
</protein>
<accession>Q4A9E9</accession>
<reference key="1">
    <citation type="journal article" date="2005" name="J. Bacteriol.">
        <title>Swine and poultry pathogens: the complete genome sequences of two strains of Mycoplasma hyopneumoniae and a strain of Mycoplasma synoviae.</title>
        <authorList>
            <person name="Vasconcelos A.T.R."/>
            <person name="Ferreira H.B."/>
            <person name="Bizarro C.V."/>
            <person name="Bonatto S.L."/>
            <person name="Carvalho M.O."/>
            <person name="Pinto P.M."/>
            <person name="Almeida D.F."/>
            <person name="Almeida L.G.P."/>
            <person name="Almeida R."/>
            <person name="Alves-Junior L."/>
            <person name="Assuncao E.N."/>
            <person name="Azevedo V.A.C."/>
            <person name="Bogo M.R."/>
            <person name="Brigido M.M."/>
            <person name="Brocchi M."/>
            <person name="Burity H.A."/>
            <person name="Camargo A.A."/>
            <person name="Camargo S.S."/>
            <person name="Carepo M.S."/>
            <person name="Carraro D.M."/>
            <person name="de Mattos Cascardo J.C."/>
            <person name="Castro L.A."/>
            <person name="Cavalcanti G."/>
            <person name="Chemale G."/>
            <person name="Collevatti R.G."/>
            <person name="Cunha C.W."/>
            <person name="Dallagiovanna B."/>
            <person name="Dambros B.P."/>
            <person name="Dellagostin O.A."/>
            <person name="Falcao C."/>
            <person name="Fantinatti-Garboggini F."/>
            <person name="Felipe M.S.S."/>
            <person name="Fiorentin L."/>
            <person name="Franco G.R."/>
            <person name="Freitas N.S.A."/>
            <person name="Frias D."/>
            <person name="Grangeiro T.B."/>
            <person name="Grisard E.C."/>
            <person name="Guimaraes C.T."/>
            <person name="Hungria M."/>
            <person name="Jardim S.N."/>
            <person name="Krieger M.A."/>
            <person name="Laurino J.P."/>
            <person name="Lima L.F.A."/>
            <person name="Lopes M.I."/>
            <person name="Loreto E.L.S."/>
            <person name="Madeira H.M.F."/>
            <person name="Manfio G.P."/>
            <person name="Maranhao A.Q."/>
            <person name="Martinkovics C.T."/>
            <person name="Medeiros S.R.B."/>
            <person name="Moreira M.A.M."/>
            <person name="Neiva M."/>
            <person name="Ramalho-Neto C.E."/>
            <person name="Nicolas M.F."/>
            <person name="Oliveira S.C."/>
            <person name="Paixao R.F.C."/>
            <person name="Pedrosa F.O."/>
            <person name="Pena S.D.J."/>
            <person name="Pereira M."/>
            <person name="Pereira-Ferrari L."/>
            <person name="Piffer I."/>
            <person name="Pinto L.S."/>
            <person name="Potrich D.P."/>
            <person name="Salim A.C.M."/>
            <person name="Santos F.R."/>
            <person name="Schmitt R."/>
            <person name="Schneider M.P.C."/>
            <person name="Schrank A."/>
            <person name="Schrank I.S."/>
            <person name="Schuck A.F."/>
            <person name="Seuanez H.N."/>
            <person name="Silva D.W."/>
            <person name="Silva R."/>
            <person name="Silva S.C."/>
            <person name="Soares C.M.A."/>
            <person name="Souza K.R.L."/>
            <person name="Souza R.C."/>
            <person name="Staats C.C."/>
            <person name="Steffens M.B.R."/>
            <person name="Teixeira S.M.R."/>
            <person name="Urmenyi T.P."/>
            <person name="Vainstein M.H."/>
            <person name="Zuccherato L.W."/>
            <person name="Simpson A.J.G."/>
            <person name="Zaha A."/>
        </authorList>
    </citation>
    <scope>NUCLEOTIDE SEQUENCE [LARGE SCALE GENOMIC DNA]</scope>
    <source>
        <strain>J / ATCC 25934 / NCTC 10110</strain>
    </source>
</reference>
<sequence length="236" mass="26319">MDSTILIKLSGESLANKQKSLAIDYELVRQIGSQLKEIQNLGHKILIVIGGGNFWRGTSAAKNGINRNTADYIGMLGTVMNGLALDSVFRDLGIKTRVLSSMSLDPRICEYFVREKAMKYLEDNNVLIFVGGTGRPFFTTDSAATLFASEMGANIILVGKNNVNGIFDSDPKINPNALRYDKITYNQVIEKNLKVMDSTAFSMARDNKIKLLIFDIKEKNSISKLIKRQIKHTEVY</sequence>
<keyword id="KW-0067">ATP-binding</keyword>
<keyword id="KW-0963">Cytoplasm</keyword>
<keyword id="KW-0418">Kinase</keyword>
<keyword id="KW-0547">Nucleotide-binding</keyword>
<keyword id="KW-0665">Pyrimidine biosynthesis</keyword>
<keyword id="KW-0808">Transferase</keyword>
<gene>
    <name evidence="1" type="primary">pyrH</name>
    <name type="ordered locus">MHJ_0536</name>
</gene>
<organism>
    <name type="scientific">Mesomycoplasma hyopneumoniae (strain J / ATCC 25934 / NCTC 10110)</name>
    <name type="common">Mycoplasma hyopneumoniae</name>
    <dbReference type="NCBI Taxonomy" id="262719"/>
    <lineage>
        <taxon>Bacteria</taxon>
        <taxon>Bacillati</taxon>
        <taxon>Mycoplasmatota</taxon>
        <taxon>Mycoplasmoidales</taxon>
        <taxon>Metamycoplasmataceae</taxon>
        <taxon>Mesomycoplasma</taxon>
    </lineage>
</organism>
<comment type="function">
    <text evidence="1">Catalyzes the reversible phosphorylation of UMP to UDP.</text>
</comment>
<comment type="catalytic activity">
    <reaction evidence="1">
        <text>UMP + ATP = UDP + ADP</text>
        <dbReference type="Rhea" id="RHEA:24400"/>
        <dbReference type="ChEBI" id="CHEBI:30616"/>
        <dbReference type="ChEBI" id="CHEBI:57865"/>
        <dbReference type="ChEBI" id="CHEBI:58223"/>
        <dbReference type="ChEBI" id="CHEBI:456216"/>
        <dbReference type="EC" id="2.7.4.22"/>
    </reaction>
</comment>
<comment type="activity regulation">
    <text evidence="1">Inhibited by UTP.</text>
</comment>
<comment type="pathway">
    <text evidence="1">Pyrimidine metabolism; CTP biosynthesis via de novo pathway; UDP from UMP (UMPK route): step 1/1.</text>
</comment>
<comment type="subunit">
    <text evidence="1">Homohexamer.</text>
</comment>
<comment type="subcellular location">
    <subcellularLocation>
        <location evidence="1">Cytoplasm</location>
    </subcellularLocation>
</comment>
<comment type="similarity">
    <text evidence="1">Belongs to the UMP kinase family.</text>
</comment>
<proteinExistence type="inferred from homology"/>
<evidence type="ECO:0000255" key="1">
    <source>
        <dbReference type="HAMAP-Rule" id="MF_01220"/>
    </source>
</evidence>
<name>PYRH_MESHJ</name>